<protein>
    <recommendedName>
        <fullName evidence="1">Valine--tRNA ligase</fullName>
        <ecNumber evidence="1">6.1.1.9</ecNumber>
    </recommendedName>
    <alternativeName>
        <fullName evidence="1">Valyl-tRNA synthetase</fullName>
        <shortName evidence="1">ValRS</shortName>
    </alternativeName>
</protein>
<keyword id="KW-0030">Aminoacyl-tRNA synthetase</keyword>
<keyword id="KW-0067">ATP-binding</keyword>
<keyword id="KW-0175">Coiled coil</keyword>
<keyword id="KW-0963">Cytoplasm</keyword>
<keyword id="KW-0436">Ligase</keyword>
<keyword id="KW-0547">Nucleotide-binding</keyword>
<keyword id="KW-0648">Protein biosynthesis</keyword>
<keyword id="KW-1185">Reference proteome</keyword>
<feature type="chain" id="PRO_0000106215" description="Valine--tRNA ligase">
    <location>
        <begin position="1"/>
        <end position="875"/>
    </location>
</feature>
<feature type="coiled-coil region" evidence="1">
    <location>
        <begin position="803"/>
        <end position="837"/>
    </location>
</feature>
<feature type="short sequence motif" description="'HIGH' region">
    <location>
        <begin position="45"/>
        <end position="55"/>
    </location>
</feature>
<feature type="short sequence motif" description="'KMSKS' region">
    <location>
        <begin position="524"/>
        <end position="528"/>
    </location>
</feature>
<feature type="binding site" evidence="1">
    <location>
        <position position="527"/>
    </location>
    <ligand>
        <name>ATP</name>
        <dbReference type="ChEBI" id="CHEBI:30616"/>
    </ligand>
</feature>
<dbReference type="EC" id="6.1.1.9" evidence="1"/>
<dbReference type="EMBL" id="AE000783">
    <property type="protein sequence ID" value="AAC67078.1"/>
    <property type="molecule type" value="Genomic_DNA"/>
</dbReference>
<dbReference type="PIR" id="A70192">
    <property type="entry name" value="A70192"/>
</dbReference>
<dbReference type="RefSeq" id="NP_212872.1">
    <property type="nucleotide sequence ID" value="NC_001318.1"/>
</dbReference>
<dbReference type="RefSeq" id="WP_002657488.1">
    <property type="nucleotide sequence ID" value="NC_001318.1"/>
</dbReference>
<dbReference type="SMR" id="O51680"/>
<dbReference type="STRING" id="224326.BB_0738"/>
<dbReference type="PaxDb" id="224326-BB_0738"/>
<dbReference type="EnsemblBacteria" id="AAC67078">
    <property type="protein sequence ID" value="AAC67078"/>
    <property type="gene ID" value="BB_0738"/>
</dbReference>
<dbReference type="GeneID" id="56567547"/>
<dbReference type="KEGG" id="bbu:BB_0738"/>
<dbReference type="PATRIC" id="fig|224326.49.peg.1129"/>
<dbReference type="HOGENOM" id="CLU_001493_0_2_12"/>
<dbReference type="OrthoDB" id="9810365at2"/>
<dbReference type="Proteomes" id="UP000001807">
    <property type="component" value="Chromosome"/>
</dbReference>
<dbReference type="GO" id="GO:0005829">
    <property type="term" value="C:cytosol"/>
    <property type="evidence" value="ECO:0007669"/>
    <property type="project" value="TreeGrafter"/>
</dbReference>
<dbReference type="GO" id="GO:0002161">
    <property type="term" value="F:aminoacyl-tRNA deacylase activity"/>
    <property type="evidence" value="ECO:0007669"/>
    <property type="project" value="InterPro"/>
</dbReference>
<dbReference type="GO" id="GO:0005524">
    <property type="term" value="F:ATP binding"/>
    <property type="evidence" value="ECO:0007669"/>
    <property type="project" value="UniProtKB-UniRule"/>
</dbReference>
<dbReference type="GO" id="GO:0004832">
    <property type="term" value="F:valine-tRNA ligase activity"/>
    <property type="evidence" value="ECO:0007669"/>
    <property type="project" value="UniProtKB-UniRule"/>
</dbReference>
<dbReference type="GO" id="GO:0006438">
    <property type="term" value="P:valyl-tRNA aminoacylation"/>
    <property type="evidence" value="ECO:0007669"/>
    <property type="project" value="UniProtKB-UniRule"/>
</dbReference>
<dbReference type="CDD" id="cd07962">
    <property type="entry name" value="Anticodon_Ia_Val"/>
    <property type="match status" value="1"/>
</dbReference>
<dbReference type="CDD" id="cd00817">
    <property type="entry name" value="ValRS_core"/>
    <property type="match status" value="1"/>
</dbReference>
<dbReference type="FunFam" id="3.40.50.620:FF:000098">
    <property type="entry name" value="Valine--tRNA ligase"/>
    <property type="match status" value="1"/>
</dbReference>
<dbReference type="Gene3D" id="3.40.50.620">
    <property type="entry name" value="HUPs"/>
    <property type="match status" value="2"/>
</dbReference>
<dbReference type="Gene3D" id="1.10.730.10">
    <property type="entry name" value="Isoleucyl-tRNA Synthetase, Domain 1"/>
    <property type="match status" value="1"/>
</dbReference>
<dbReference type="Gene3D" id="1.10.287.380">
    <property type="entry name" value="Valyl-tRNA synthetase, C-terminal domain"/>
    <property type="match status" value="1"/>
</dbReference>
<dbReference type="HAMAP" id="MF_02004">
    <property type="entry name" value="Val_tRNA_synth_type1"/>
    <property type="match status" value="1"/>
</dbReference>
<dbReference type="InterPro" id="IPR001412">
    <property type="entry name" value="aa-tRNA-synth_I_CS"/>
</dbReference>
<dbReference type="InterPro" id="IPR002300">
    <property type="entry name" value="aa-tRNA-synth_Ia"/>
</dbReference>
<dbReference type="InterPro" id="IPR033705">
    <property type="entry name" value="Anticodon_Ia_Val"/>
</dbReference>
<dbReference type="InterPro" id="IPR013155">
    <property type="entry name" value="M/V/L/I-tRNA-synth_anticd-bd"/>
</dbReference>
<dbReference type="InterPro" id="IPR014729">
    <property type="entry name" value="Rossmann-like_a/b/a_fold"/>
</dbReference>
<dbReference type="InterPro" id="IPR010978">
    <property type="entry name" value="tRNA-bd_arm"/>
</dbReference>
<dbReference type="InterPro" id="IPR009080">
    <property type="entry name" value="tRNAsynth_Ia_anticodon-bd"/>
</dbReference>
<dbReference type="InterPro" id="IPR037118">
    <property type="entry name" value="Val-tRNA_synth_C_sf"/>
</dbReference>
<dbReference type="InterPro" id="IPR019499">
    <property type="entry name" value="Val-tRNA_synth_tRNA-bd"/>
</dbReference>
<dbReference type="InterPro" id="IPR009008">
    <property type="entry name" value="Val/Leu/Ile-tRNA-synth_edit"/>
</dbReference>
<dbReference type="InterPro" id="IPR002303">
    <property type="entry name" value="Valyl-tRNA_ligase"/>
</dbReference>
<dbReference type="NCBIfam" id="NF004349">
    <property type="entry name" value="PRK05729.1"/>
    <property type="match status" value="1"/>
</dbReference>
<dbReference type="NCBIfam" id="TIGR00422">
    <property type="entry name" value="valS"/>
    <property type="match status" value="1"/>
</dbReference>
<dbReference type="PANTHER" id="PTHR11946:SF93">
    <property type="entry name" value="VALINE--TRNA LIGASE, CHLOROPLASTIC_MITOCHONDRIAL 2"/>
    <property type="match status" value="1"/>
</dbReference>
<dbReference type="PANTHER" id="PTHR11946">
    <property type="entry name" value="VALYL-TRNA SYNTHETASES"/>
    <property type="match status" value="1"/>
</dbReference>
<dbReference type="Pfam" id="PF08264">
    <property type="entry name" value="Anticodon_1"/>
    <property type="match status" value="1"/>
</dbReference>
<dbReference type="Pfam" id="PF00133">
    <property type="entry name" value="tRNA-synt_1"/>
    <property type="match status" value="1"/>
</dbReference>
<dbReference type="Pfam" id="PF10458">
    <property type="entry name" value="Val_tRNA-synt_C"/>
    <property type="match status" value="1"/>
</dbReference>
<dbReference type="PRINTS" id="PR00986">
    <property type="entry name" value="TRNASYNTHVAL"/>
</dbReference>
<dbReference type="SUPFAM" id="SSF47323">
    <property type="entry name" value="Anticodon-binding domain of a subclass of class I aminoacyl-tRNA synthetases"/>
    <property type="match status" value="1"/>
</dbReference>
<dbReference type="SUPFAM" id="SSF52374">
    <property type="entry name" value="Nucleotidylyl transferase"/>
    <property type="match status" value="1"/>
</dbReference>
<dbReference type="SUPFAM" id="SSF46589">
    <property type="entry name" value="tRNA-binding arm"/>
    <property type="match status" value="1"/>
</dbReference>
<dbReference type="SUPFAM" id="SSF50677">
    <property type="entry name" value="ValRS/IleRS/LeuRS editing domain"/>
    <property type="match status" value="1"/>
</dbReference>
<dbReference type="PROSITE" id="PS00178">
    <property type="entry name" value="AA_TRNA_LIGASE_I"/>
    <property type="match status" value="1"/>
</dbReference>
<sequence>MNCRPLEKYDPKAFEDEIYTKWLKNNVFLPDNSLFEKFSMVAPPPNVTGVLHMGHALNFVLQDVLVRYKRMKRHNTLWLFGTDHAGIATQAVFERHLKKIGKSKDDFEREELVQEIFKLKDRHRGIIVNQINKLGASYDHSRERFTLDENLCKAVNKVFKDLYFKGLIYRGEYLVNLDPGSGSVVSDEEIEYKEVDGKLYFVKYFIDNSSFIEVATTRPETMFGDTAIAVNPNDERYKSLVGKEVTIPLTTKKIKVIADFYVDSAFGTGALKVTPAHDPNDFEISKRHNISKVNILTQDGKLNKNVPLQYQGLSAKDARFKIETELMEKGFLQDVKKHKQQVGHCYRSGEVIEPYLSTQWFVRMKPLADKALKALENGELKFYPKKWENTYKYWLSNIRDWCISRQLVWGHRIPVWYNVDTSELIVSDTDPSLDEKNMGKRFVQDPDVLDTWFSSWLWPFSSLGWPNVDVDFKNYYPTNTLITAYDIIFFWVARMVMAGLEFTGQVPFKDVYITPLLRDKQGKKMSKSLGNGIDPLDIINEYGSDSLRFTLSFLSVQGQDLNIDAKDFMFGAKFANKVFNASKFILLNLKNRKILNDLKFNDIDKWLLTSLNSTILGVESSFANYKYNEASKFVYEFFWNDFCDWYIEISKIDLNNENVDIQNMAISKLLFFLKKSLLILHPFIPFVTEKIYSEFAEKEDILALNEYPNFDIANNFQEEFEIFKVLKTFIIAIRTLKSEFNIPASVEIDVALKFDADFKYEAYFKANESIVKRMINFKNIFYNENYDGMLGVAAVGFEIYADVKSLIDKTKELIRLEKQLEKYKMLNISVSKKLENENFLMNAPKEIVESEKLKFVEFSSLINKINNYIINLKNL</sequence>
<proteinExistence type="inferred from homology"/>
<accession>O51680</accession>
<evidence type="ECO:0000255" key="1">
    <source>
        <dbReference type="HAMAP-Rule" id="MF_02004"/>
    </source>
</evidence>
<organism>
    <name type="scientific">Borreliella burgdorferi (strain ATCC 35210 / DSM 4680 / CIP 102532 / B31)</name>
    <name type="common">Borrelia burgdorferi</name>
    <dbReference type="NCBI Taxonomy" id="224326"/>
    <lineage>
        <taxon>Bacteria</taxon>
        <taxon>Pseudomonadati</taxon>
        <taxon>Spirochaetota</taxon>
        <taxon>Spirochaetia</taxon>
        <taxon>Spirochaetales</taxon>
        <taxon>Borreliaceae</taxon>
        <taxon>Borreliella</taxon>
    </lineage>
</organism>
<comment type="function">
    <text evidence="1">Catalyzes the attachment of valine to tRNA(Val). As ValRS can inadvertently accommodate and process structurally similar amino acids such as threonine, to avoid such errors, it has a 'posttransfer' editing activity that hydrolyzes mischarged Thr-tRNA(Val) in a tRNA-dependent manner.</text>
</comment>
<comment type="catalytic activity">
    <reaction evidence="1">
        <text>tRNA(Val) + L-valine + ATP = L-valyl-tRNA(Val) + AMP + diphosphate</text>
        <dbReference type="Rhea" id="RHEA:10704"/>
        <dbReference type="Rhea" id="RHEA-COMP:9672"/>
        <dbReference type="Rhea" id="RHEA-COMP:9708"/>
        <dbReference type="ChEBI" id="CHEBI:30616"/>
        <dbReference type="ChEBI" id="CHEBI:33019"/>
        <dbReference type="ChEBI" id="CHEBI:57762"/>
        <dbReference type="ChEBI" id="CHEBI:78442"/>
        <dbReference type="ChEBI" id="CHEBI:78537"/>
        <dbReference type="ChEBI" id="CHEBI:456215"/>
        <dbReference type="EC" id="6.1.1.9"/>
    </reaction>
</comment>
<comment type="subunit">
    <text evidence="1">Monomer.</text>
</comment>
<comment type="subcellular location">
    <subcellularLocation>
        <location evidence="1">Cytoplasm</location>
    </subcellularLocation>
</comment>
<comment type="domain">
    <text evidence="1">ValRS has two distinct active sites: one for aminoacylation and one for editing. The misactivated threonine is translocated from the active site to the editing site.</text>
</comment>
<comment type="domain">
    <text evidence="1">The C-terminal coiled-coil domain is crucial for aminoacylation activity.</text>
</comment>
<comment type="similarity">
    <text evidence="1">Belongs to the class-I aminoacyl-tRNA synthetase family. ValS type 1 subfamily.</text>
</comment>
<gene>
    <name evidence="1" type="primary">valS</name>
    <name type="ordered locus">BB_0738</name>
</gene>
<reference key="1">
    <citation type="journal article" date="1997" name="Nature">
        <title>Genomic sequence of a Lyme disease spirochaete, Borrelia burgdorferi.</title>
        <authorList>
            <person name="Fraser C.M."/>
            <person name="Casjens S."/>
            <person name="Huang W.M."/>
            <person name="Sutton G.G."/>
            <person name="Clayton R.A."/>
            <person name="Lathigra R."/>
            <person name="White O."/>
            <person name="Ketchum K.A."/>
            <person name="Dodson R.J."/>
            <person name="Hickey E.K."/>
            <person name="Gwinn M.L."/>
            <person name="Dougherty B.A."/>
            <person name="Tomb J.-F."/>
            <person name="Fleischmann R.D."/>
            <person name="Richardson D.L."/>
            <person name="Peterson J.D."/>
            <person name="Kerlavage A.R."/>
            <person name="Quackenbush J."/>
            <person name="Salzberg S.L."/>
            <person name="Hanson M."/>
            <person name="van Vugt R."/>
            <person name="Palmer N."/>
            <person name="Adams M.D."/>
            <person name="Gocayne J.D."/>
            <person name="Weidman J.F."/>
            <person name="Utterback T.R."/>
            <person name="Watthey L."/>
            <person name="McDonald L.A."/>
            <person name="Artiach P."/>
            <person name="Bowman C."/>
            <person name="Garland S.A."/>
            <person name="Fujii C."/>
            <person name="Cotton M.D."/>
            <person name="Horst K."/>
            <person name="Roberts K.M."/>
            <person name="Hatch B."/>
            <person name="Smith H.O."/>
            <person name="Venter J.C."/>
        </authorList>
    </citation>
    <scope>NUCLEOTIDE SEQUENCE [LARGE SCALE GENOMIC DNA]</scope>
    <source>
        <strain>ATCC 35210 / DSM 4680 / CIP 102532 / B31</strain>
    </source>
</reference>
<name>SYV_BORBU</name>